<comment type="subcellular location">
    <subcellularLocation>
        <location evidence="2">Cell membrane</location>
        <topology evidence="2">Multi-pass membrane protein</topology>
    </subcellularLocation>
</comment>
<protein>
    <recommendedName>
        <fullName>Uncharacterized protein RP591</fullName>
    </recommendedName>
</protein>
<organism>
    <name type="scientific">Rickettsia prowazekii (strain Madrid E)</name>
    <dbReference type="NCBI Taxonomy" id="272947"/>
    <lineage>
        <taxon>Bacteria</taxon>
        <taxon>Pseudomonadati</taxon>
        <taxon>Pseudomonadota</taxon>
        <taxon>Alphaproteobacteria</taxon>
        <taxon>Rickettsiales</taxon>
        <taxon>Rickettsiaceae</taxon>
        <taxon>Rickettsieae</taxon>
        <taxon>Rickettsia</taxon>
        <taxon>typhus group</taxon>
    </lineage>
</organism>
<proteinExistence type="predicted"/>
<sequence length="248" mass="29273">MIIAQNKTNYQDLLKTLAVIAMTIDHIGLYLYPELTIMRIIGRIAMPVFCFFAGYNFYDKPKTRIIIYGVILQIYTTILFKQFLTTNILISIYLGQCYIYYFRNSITSFFYNGFCHVAVMIILWYISWTLIDYGTLVIAIMILGFIAQHEKTNLKLCCFIAIFTSIVHSTFFTLLIPLSDFNFSNTDLILNLTFLTITYILMILSDYSQKILINIKWISRNVIYIYCIQIIILQFIFIYKYTYGFKNW</sequence>
<gene>
    <name type="ordered locus">RP591</name>
</gene>
<reference key="1">
    <citation type="journal article" date="1998" name="Nature">
        <title>The genome sequence of Rickettsia prowazekii and the origin of mitochondria.</title>
        <authorList>
            <person name="Andersson S.G.E."/>
            <person name="Zomorodipour A."/>
            <person name="Andersson J.O."/>
            <person name="Sicheritz-Ponten T."/>
            <person name="Alsmark U.C.M."/>
            <person name="Podowski R.M."/>
            <person name="Naeslund A.K."/>
            <person name="Eriksson A.-S."/>
            <person name="Winkler H.H."/>
            <person name="Kurland C.G."/>
        </authorList>
    </citation>
    <scope>NUCLEOTIDE SEQUENCE [LARGE SCALE GENOMIC DNA]</scope>
    <source>
        <strain>Madrid E</strain>
    </source>
</reference>
<dbReference type="EMBL" id="AJ235272">
    <property type="protein sequence ID" value="CAA15036.1"/>
    <property type="molecule type" value="Genomic_DNA"/>
</dbReference>
<dbReference type="PIR" id="B71664">
    <property type="entry name" value="B71664"/>
</dbReference>
<dbReference type="RefSeq" id="NP_220960.1">
    <property type="nucleotide sequence ID" value="NC_000963.1"/>
</dbReference>
<dbReference type="RefSeq" id="WP_004597918.1">
    <property type="nucleotide sequence ID" value="NC_000963.1"/>
</dbReference>
<dbReference type="STRING" id="272947.gene:17555671"/>
<dbReference type="EnsemblBacteria" id="CAA15036">
    <property type="protein sequence ID" value="CAA15036"/>
    <property type="gene ID" value="CAA15036"/>
</dbReference>
<dbReference type="KEGG" id="rpr:RP591"/>
<dbReference type="PATRIC" id="fig|272947.5.peg.608"/>
<dbReference type="eggNOG" id="ENOG5033C51">
    <property type="taxonomic scope" value="Bacteria"/>
</dbReference>
<dbReference type="HOGENOM" id="CLU_1110729_0_0_5"/>
<dbReference type="OrthoDB" id="9781069at2"/>
<dbReference type="Proteomes" id="UP000002480">
    <property type="component" value="Chromosome"/>
</dbReference>
<dbReference type="GO" id="GO:0005886">
    <property type="term" value="C:plasma membrane"/>
    <property type="evidence" value="ECO:0007669"/>
    <property type="project" value="UniProtKB-SubCell"/>
</dbReference>
<dbReference type="InterPro" id="IPR008875">
    <property type="entry name" value="TraX"/>
</dbReference>
<dbReference type="Pfam" id="PF05857">
    <property type="entry name" value="TraX"/>
    <property type="match status" value="1"/>
</dbReference>
<keyword id="KW-1003">Cell membrane</keyword>
<keyword id="KW-0472">Membrane</keyword>
<keyword id="KW-1185">Reference proteome</keyword>
<keyword id="KW-0812">Transmembrane</keyword>
<keyword id="KW-1133">Transmembrane helix</keyword>
<evidence type="ECO:0000255" key="1"/>
<evidence type="ECO:0000305" key="2"/>
<feature type="chain" id="PRO_0000101399" description="Uncharacterized protein RP591">
    <location>
        <begin position="1"/>
        <end position="248"/>
    </location>
</feature>
<feature type="transmembrane region" description="Helical" evidence="1">
    <location>
        <begin position="65"/>
        <end position="85"/>
    </location>
</feature>
<feature type="transmembrane region" description="Helical" evidence="1">
    <location>
        <begin position="105"/>
        <end position="125"/>
    </location>
</feature>
<feature type="transmembrane region" description="Helical" evidence="1">
    <location>
        <begin position="126"/>
        <end position="146"/>
    </location>
</feature>
<feature type="transmembrane region" description="Helical" evidence="1">
    <location>
        <begin position="156"/>
        <end position="176"/>
    </location>
</feature>
<feature type="transmembrane region" description="Helical" evidence="1">
    <location>
        <begin position="188"/>
        <end position="208"/>
    </location>
</feature>
<feature type="transmembrane region" description="Helical" evidence="1">
    <location>
        <begin position="222"/>
        <end position="242"/>
    </location>
</feature>
<accession>Q9ZCW3</accession>
<name>Y591_RICPR</name>